<protein>
    <recommendedName>
        <fullName evidence="1">UPF0178 protein PSEEN5341</fullName>
    </recommendedName>
</protein>
<reference key="1">
    <citation type="journal article" date="2006" name="Nat. Biotechnol.">
        <title>Complete genome sequence of the entomopathogenic and metabolically versatile soil bacterium Pseudomonas entomophila.</title>
        <authorList>
            <person name="Vodovar N."/>
            <person name="Vallenet D."/>
            <person name="Cruveiller S."/>
            <person name="Rouy Z."/>
            <person name="Barbe V."/>
            <person name="Acosta C."/>
            <person name="Cattolico L."/>
            <person name="Jubin C."/>
            <person name="Lajus A."/>
            <person name="Segurens B."/>
            <person name="Vacherie B."/>
            <person name="Wincker P."/>
            <person name="Weissenbach J."/>
            <person name="Lemaitre B."/>
            <person name="Medigue C."/>
            <person name="Boccard F."/>
        </authorList>
    </citation>
    <scope>NUCLEOTIDE SEQUENCE [LARGE SCALE GENOMIC DNA]</scope>
    <source>
        <strain>L48</strain>
    </source>
</reference>
<dbReference type="EMBL" id="CT573326">
    <property type="protein sequence ID" value="CAK17958.1"/>
    <property type="molecule type" value="Genomic_DNA"/>
</dbReference>
<dbReference type="RefSeq" id="WP_011536316.1">
    <property type="nucleotide sequence ID" value="NC_008027.1"/>
</dbReference>
<dbReference type="STRING" id="384676.PSEEN5341"/>
<dbReference type="GeneID" id="32808255"/>
<dbReference type="KEGG" id="pen:PSEEN5341"/>
<dbReference type="eggNOG" id="COG1671">
    <property type="taxonomic scope" value="Bacteria"/>
</dbReference>
<dbReference type="HOGENOM" id="CLU_106619_2_1_6"/>
<dbReference type="OrthoDB" id="9798918at2"/>
<dbReference type="Proteomes" id="UP000000658">
    <property type="component" value="Chromosome"/>
</dbReference>
<dbReference type="CDD" id="cd18720">
    <property type="entry name" value="PIN_YqxD-like"/>
    <property type="match status" value="1"/>
</dbReference>
<dbReference type="HAMAP" id="MF_00489">
    <property type="entry name" value="UPF0178"/>
    <property type="match status" value="1"/>
</dbReference>
<dbReference type="InterPro" id="IPR003791">
    <property type="entry name" value="UPF0178"/>
</dbReference>
<dbReference type="NCBIfam" id="NF001095">
    <property type="entry name" value="PRK00124.1"/>
    <property type="match status" value="1"/>
</dbReference>
<dbReference type="PANTHER" id="PTHR35146">
    <property type="entry name" value="UPF0178 PROTEIN YAII"/>
    <property type="match status" value="1"/>
</dbReference>
<dbReference type="PANTHER" id="PTHR35146:SF1">
    <property type="entry name" value="UPF0178 PROTEIN YAII"/>
    <property type="match status" value="1"/>
</dbReference>
<dbReference type="Pfam" id="PF02639">
    <property type="entry name" value="DUF188"/>
    <property type="match status" value="1"/>
</dbReference>
<comment type="similarity">
    <text evidence="1">Belongs to the UPF0178 family.</text>
</comment>
<feature type="chain" id="PRO_1000014433" description="UPF0178 protein PSEEN5341">
    <location>
        <begin position="1"/>
        <end position="150"/>
    </location>
</feature>
<evidence type="ECO:0000255" key="1">
    <source>
        <dbReference type="HAMAP-Rule" id="MF_00489"/>
    </source>
</evidence>
<name>Y5341_PSEE4</name>
<accession>Q1I328</accession>
<organism>
    <name type="scientific">Pseudomonas entomophila (strain L48)</name>
    <dbReference type="NCBI Taxonomy" id="384676"/>
    <lineage>
        <taxon>Bacteria</taxon>
        <taxon>Pseudomonadati</taxon>
        <taxon>Pseudomonadota</taxon>
        <taxon>Gammaproteobacteria</taxon>
        <taxon>Pseudomonadales</taxon>
        <taxon>Pseudomonadaceae</taxon>
        <taxon>Pseudomonas</taxon>
    </lineage>
</organism>
<proteinExistence type="inferred from homology"/>
<gene>
    <name type="ordered locus">PSEEN5341</name>
</gene>
<sequence length="150" mass="16431">MRVWIDADACPKAAKDLIVKFALKRKLEVVMVAGQPQIKPAFACVRLIVVPSGMDAADDYLVENAVPGELVICSDVPLADRLIKKGVAALDPRGREFDERNMGERLAVRNLFTELREQGQVGGGQAPYGEREKQAFANALDRILTRLAKG</sequence>